<protein>
    <recommendedName>
        <fullName evidence="3">Large ribosomal subunit protein bL27m</fullName>
    </recommendedName>
    <alternativeName>
        <fullName>54S ribosomal protein L27, mitochondrial</fullName>
    </alternativeName>
</protein>
<organism>
    <name type="scientific">Cryptococcus neoformans var. neoformans serotype D (strain B-3501A)</name>
    <name type="common">Filobasidiella neoformans</name>
    <dbReference type="NCBI Taxonomy" id="283643"/>
    <lineage>
        <taxon>Eukaryota</taxon>
        <taxon>Fungi</taxon>
        <taxon>Dikarya</taxon>
        <taxon>Basidiomycota</taxon>
        <taxon>Agaricomycotina</taxon>
        <taxon>Tremellomycetes</taxon>
        <taxon>Tremellales</taxon>
        <taxon>Cryptococcaceae</taxon>
        <taxon>Cryptococcus</taxon>
        <taxon>Cryptococcus neoformans species complex</taxon>
    </lineage>
</organism>
<name>RM27_CRYNB</name>
<dbReference type="EMBL" id="AAEY01000005">
    <property type="protein sequence ID" value="EAL22913.1"/>
    <property type="molecule type" value="Genomic_DNA"/>
</dbReference>
<dbReference type="RefSeq" id="XP_777560.1">
    <property type="nucleotide sequence ID" value="XM_772467.1"/>
</dbReference>
<dbReference type="SMR" id="P0CQ49"/>
<dbReference type="EnsemblFungi" id="AAW41199">
    <property type="protein sequence ID" value="AAW41199"/>
    <property type="gene ID" value="CNA07010"/>
</dbReference>
<dbReference type="GeneID" id="4933947"/>
<dbReference type="KEGG" id="cnb:CNBA6820"/>
<dbReference type="VEuPathDB" id="FungiDB:CNBA6820"/>
<dbReference type="HOGENOM" id="CLU_095424_3_3_1"/>
<dbReference type="OrthoDB" id="536at5206"/>
<dbReference type="GO" id="GO:0005762">
    <property type="term" value="C:mitochondrial large ribosomal subunit"/>
    <property type="evidence" value="ECO:0007669"/>
    <property type="project" value="TreeGrafter"/>
</dbReference>
<dbReference type="GO" id="GO:0003735">
    <property type="term" value="F:structural constituent of ribosome"/>
    <property type="evidence" value="ECO:0007669"/>
    <property type="project" value="InterPro"/>
</dbReference>
<dbReference type="GO" id="GO:0006412">
    <property type="term" value="P:translation"/>
    <property type="evidence" value="ECO:0007669"/>
    <property type="project" value="InterPro"/>
</dbReference>
<dbReference type="FunFam" id="2.40.50.100:FF:000031">
    <property type="entry name" value="39S ribosomal protein L27, mitochondrial"/>
    <property type="match status" value="1"/>
</dbReference>
<dbReference type="Gene3D" id="2.40.50.100">
    <property type="match status" value="1"/>
</dbReference>
<dbReference type="InterPro" id="IPR001684">
    <property type="entry name" value="Ribosomal_bL27"/>
</dbReference>
<dbReference type="InterPro" id="IPR018261">
    <property type="entry name" value="Ribosomal_bL27_CS"/>
</dbReference>
<dbReference type="NCBIfam" id="TIGR00062">
    <property type="entry name" value="L27"/>
    <property type="match status" value="1"/>
</dbReference>
<dbReference type="PANTHER" id="PTHR15893:SF0">
    <property type="entry name" value="LARGE RIBOSOMAL SUBUNIT PROTEIN BL27M"/>
    <property type="match status" value="1"/>
</dbReference>
<dbReference type="PANTHER" id="PTHR15893">
    <property type="entry name" value="RIBOSOMAL PROTEIN L27"/>
    <property type="match status" value="1"/>
</dbReference>
<dbReference type="Pfam" id="PF01016">
    <property type="entry name" value="Ribosomal_L27"/>
    <property type="match status" value="1"/>
</dbReference>
<dbReference type="PRINTS" id="PR00063">
    <property type="entry name" value="RIBOSOMALL27"/>
</dbReference>
<dbReference type="SUPFAM" id="SSF110324">
    <property type="entry name" value="Ribosomal L27 protein-like"/>
    <property type="match status" value="1"/>
</dbReference>
<dbReference type="PROSITE" id="PS00831">
    <property type="entry name" value="RIBOSOMAL_L27"/>
    <property type="match status" value="1"/>
</dbReference>
<reference key="1">
    <citation type="journal article" date="2005" name="Science">
        <title>The genome of the basidiomycetous yeast and human pathogen Cryptococcus neoformans.</title>
        <authorList>
            <person name="Loftus B.J."/>
            <person name="Fung E."/>
            <person name="Roncaglia P."/>
            <person name="Rowley D."/>
            <person name="Amedeo P."/>
            <person name="Bruno D."/>
            <person name="Vamathevan J."/>
            <person name="Miranda M."/>
            <person name="Anderson I.J."/>
            <person name="Fraser J.A."/>
            <person name="Allen J.E."/>
            <person name="Bosdet I.E."/>
            <person name="Brent M.R."/>
            <person name="Chiu R."/>
            <person name="Doering T.L."/>
            <person name="Donlin M.J."/>
            <person name="D'Souza C.A."/>
            <person name="Fox D.S."/>
            <person name="Grinberg V."/>
            <person name="Fu J."/>
            <person name="Fukushima M."/>
            <person name="Haas B.J."/>
            <person name="Huang J.C."/>
            <person name="Janbon G."/>
            <person name="Jones S.J.M."/>
            <person name="Koo H.L."/>
            <person name="Krzywinski M.I."/>
            <person name="Kwon-Chung K.J."/>
            <person name="Lengeler K.B."/>
            <person name="Maiti R."/>
            <person name="Marra M.A."/>
            <person name="Marra R.E."/>
            <person name="Mathewson C.A."/>
            <person name="Mitchell T.G."/>
            <person name="Pertea M."/>
            <person name="Riggs F.R."/>
            <person name="Salzberg S.L."/>
            <person name="Schein J.E."/>
            <person name="Shvartsbeyn A."/>
            <person name="Shin H."/>
            <person name="Shumway M."/>
            <person name="Specht C.A."/>
            <person name="Suh B.B."/>
            <person name="Tenney A."/>
            <person name="Utterback T.R."/>
            <person name="Wickes B.L."/>
            <person name="Wortman J.R."/>
            <person name="Wye N.H."/>
            <person name="Kronstad J.W."/>
            <person name="Lodge J.K."/>
            <person name="Heitman J."/>
            <person name="Davis R.W."/>
            <person name="Fraser C.M."/>
            <person name="Hyman R.W."/>
        </authorList>
    </citation>
    <scope>NUCLEOTIDE SEQUENCE [LARGE SCALE GENOMIC DNA]</scope>
    <source>
        <strain>B-3501A</strain>
    </source>
</reference>
<sequence>MFLRPTSIPSAVSQIRAQLFAGPSSLASQIQVRWASKAAGGKSKNGRESAGRRLGVKRYGDQYVTPGTIIVRQRGANFHPGQNVAVGKDFTIYALQPGYVKFYQHHLPYPHLSRPDQPGPQNVPSVKRPRQFRQFVGIARDREDKLPRDERAVGRERRFWGWPKEKVEVVPEAAVESAAGIQA</sequence>
<accession>P0CQ49</accession>
<accession>P46288</accession>
<accession>Q55Z05</accession>
<accession>Q5KNC1</accession>
<keyword id="KW-0496">Mitochondrion</keyword>
<keyword id="KW-0687">Ribonucleoprotein</keyword>
<keyword id="KW-0689">Ribosomal protein</keyword>
<keyword id="KW-0809">Transit peptide</keyword>
<feature type="transit peptide" description="Mitochondrion" evidence="2">
    <location>
        <begin position="1"/>
        <end position="34"/>
    </location>
</feature>
<feature type="chain" id="PRO_0000410235" description="Large ribosomal subunit protein bL27m">
    <location>
        <begin position="35"/>
        <end position="183"/>
    </location>
</feature>
<gene>
    <name type="primary">RPL27</name>
    <name type="ordered locus">CNBA6820</name>
</gene>
<comment type="subcellular location">
    <subcellularLocation>
        <location evidence="1">Mitochondrion</location>
    </subcellularLocation>
</comment>
<comment type="similarity">
    <text evidence="3">Belongs to the bacterial ribosomal protein bL27 family.</text>
</comment>
<proteinExistence type="inferred from homology"/>
<evidence type="ECO:0000250" key="1"/>
<evidence type="ECO:0000255" key="2"/>
<evidence type="ECO:0000305" key="3"/>